<keyword id="KW-0025">Alternative splicing</keyword>
<keyword id="KW-1003">Cell membrane</keyword>
<keyword id="KW-0472">Membrane</keyword>
<keyword id="KW-1185">Reference proteome</keyword>
<keyword id="KW-0812">Transmembrane</keyword>
<keyword id="KW-1133">Transmembrane helix</keyword>
<evidence type="ECO:0000250" key="1">
    <source>
        <dbReference type="UniProtKB" id="A6NGC4"/>
    </source>
</evidence>
<evidence type="ECO:0000255" key="2"/>
<evidence type="ECO:0000255" key="3">
    <source>
        <dbReference type="PROSITE-ProRule" id="PRU00205"/>
    </source>
</evidence>
<evidence type="ECO:0000303" key="4">
    <source>
    </source>
</evidence>
<evidence type="ECO:0000305" key="5"/>
<protein>
    <recommendedName>
        <fullName>TLC domain-containing protein 2</fullName>
    </recommendedName>
</protein>
<comment type="function">
    <text evidence="1">Regulates the composition and fluidity of the plasma membrane (By similarity). Inhibits the incorporation of membrane-fluidizing phospholipids containing omega-3 long-chain polyunsaturated fatty acids (LCPUFA) and thereby promotes membrane rigidity (By similarity). Does not appear to have any effect on LCPUFA synthesis (By similarity).</text>
</comment>
<comment type="subcellular location">
    <subcellularLocation>
        <location evidence="1">Cell membrane</location>
        <topology evidence="5">Multi-pass membrane protein</topology>
    </subcellularLocation>
</comment>
<comment type="alternative products">
    <event type="alternative splicing"/>
    <isoform>
        <id>Q8VC26-1</id>
        <name>1</name>
        <sequence type="displayed"/>
    </isoform>
    <isoform>
        <id>Q8VC26-2</id>
        <name>2</name>
        <sequence type="described" ref="VSP_032879 VSP_032880"/>
    </isoform>
</comment>
<comment type="similarity">
    <text evidence="5">Belongs to the TLCD family.</text>
</comment>
<proteinExistence type="evidence at transcript level"/>
<reference key="1">
    <citation type="journal article" date="2005" name="Science">
        <title>The transcriptional landscape of the mammalian genome.</title>
        <authorList>
            <person name="Carninci P."/>
            <person name="Kasukawa T."/>
            <person name="Katayama S."/>
            <person name="Gough J."/>
            <person name="Frith M.C."/>
            <person name="Maeda N."/>
            <person name="Oyama R."/>
            <person name="Ravasi T."/>
            <person name="Lenhard B."/>
            <person name="Wells C."/>
            <person name="Kodzius R."/>
            <person name="Shimokawa K."/>
            <person name="Bajic V.B."/>
            <person name="Brenner S.E."/>
            <person name="Batalov S."/>
            <person name="Forrest A.R."/>
            <person name="Zavolan M."/>
            <person name="Davis M.J."/>
            <person name="Wilming L.G."/>
            <person name="Aidinis V."/>
            <person name="Allen J.E."/>
            <person name="Ambesi-Impiombato A."/>
            <person name="Apweiler R."/>
            <person name="Aturaliya R.N."/>
            <person name="Bailey T.L."/>
            <person name="Bansal M."/>
            <person name="Baxter L."/>
            <person name="Beisel K.W."/>
            <person name="Bersano T."/>
            <person name="Bono H."/>
            <person name="Chalk A.M."/>
            <person name="Chiu K.P."/>
            <person name="Choudhary V."/>
            <person name="Christoffels A."/>
            <person name="Clutterbuck D.R."/>
            <person name="Crowe M.L."/>
            <person name="Dalla E."/>
            <person name="Dalrymple B.P."/>
            <person name="de Bono B."/>
            <person name="Della Gatta G."/>
            <person name="di Bernardo D."/>
            <person name="Down T."/>
            <person name="Engstrom P."/>
            <person name="Fagiolini M."/>
            <person name="Faulkner G."/>
            <person name="Fletcher C.F."/>
            <person name="Fukushima T."/>
            <person name="Furuno M."/>
            <person name="Futaki S."/>
            <person name="Gariboldi M."/>
            <person name="Georgii-Hemming P."/>
            <person name="Gingeras T.R."/>
            <person name="Gojobori T."/>
            <person name="Green R.E."/>
            <person name="Gustincich S."/>
            <person name="Harbers M."/>
            <person name="Hayashi Y."/>
            <person name="Hensch T.K."/>
            <person name="Hirokawa N."/>
            <person name="Hill D."/>
            <person name="Huminiecki L."/>
            <person name="Iacono M."/>
            <person name="Ikeo K."/>
            <person name="Iwama A."/>
            <person name="Ishikawa T."/>
            <person name="Jakt M."/>
            <person name="Kanapin A."/>
            <person name="Katoh M."/>
            <person name="Kawasawa Y."/>
            <person name="Kelso J."/>
            <person name="Kitamura H."/>
            <person name="Kitano H."/>
            <person name="Kollias G."/>
            <person name="Krishnan S.P."/>
            <person name="Kruger A."/>
            <person name="Kummerfeld S.K."/>
            <person name="Kurochkin I.V."/>
            <person name="Lareau L.F."/>
            <person name="Lazarevic D."/>
            <person name="Lipovich L."/>
            <person name="Liu J."/>
            <person name="Liuni S."/>
            <person name="McWilliam S."/>
            <person name="Madan Babu M."/>
            <person name="Madera M."/>
            <person name="Marchionni L."/>
            <person name="Matsuda H."/>
            <person name="Matsuzawa S."/>
            <person name="Miki H."/>
            <person name="Mignone F."/>
            <person name="Miyake S."/>
            <person name="Morris K."/>
            <person name="Mottagui-Tabar S."/>
            <person name="Mulder N."/>
            <person name="Nakano N."/>
            <person name="Nakauchi H."/>
            <person name="Ng P."/>
            <person name="Nilsson R."/>
            <person name="Nishiguchi S."/>
            <person name="Nishikawa S."/>
            <person name="Nori F."/>
            <person name="Ohara O."/>
            <person name="Okazaki Y."/>
            <person name="Orlando V."/>
            <person name="Pang K.C."/>
            <person name="Pavan W.J."/>
            <person name="Pavesi G."/>
            <person name="Pesole G."/>
            <person name="Petrovsky N."/>
            <person name="Piazza S."/>
            <person name="Reed J."/>
            <person name="Reid J.F."/>
            <person name="Ring B.Z."/>
            <person name="Ringwald M."/>
            <person name="Rost B."/>
            <person name="Ruan Y."/>
            <person name="Salzberg S.L."/>
            <person name="Sandelin A."/>
            <person name="Schneider C."/>
            <person name="Schoenbach C."/>
            <person name="Sekiguchi K."/>
            <person name="Semple C.A."/>
            <person name="Seno S."/>
            <person name="Sessa L."/>
            <person name="Sheng Y."/>
            <person name="Shibata Y."/>
            <person name="Shimada H."/>
            <person name="Shimada K."/>
            <person name="Silva D."/>
            <person name="Sinclair B."/>
            <person name="Sperling S."/>
            <person name="Stupka E."/>
            <person name="Sugiura K."/>
            <person name="Sultana R."/>
            <person name="Takenaka Y."/>
            <person name="Taki K."/>
            <person name="Tammoja K."/>
            <person name="Tan S.L."/>
            <person name="Tang S."/>
            <person name="Taylor M.S."/>
            <person name="Tegner J."/>
            <person name="Teichmann S.A."/>
            <person name="Ueda H.R."/>
            <person name="van Nimwegen E."/>
            <person name="Verardo R."/>
            <person name="Wei C.L."/>
            <person name="Yagi K."/>
            <person name="Yamanishi H."/>
            <person name="Zabarovsky E."/>
            <person name="Zhu S."/>
            <person name="Zimmer A."/>
            <person name="Hide W."/>
            <person name="Bult C."/>
            <person name="Grimmond S.M."/>
            <person name="Teasdale R.D."/>
            <person name="Liu E.T."/>
            <person name="Brusic V."/>
            <person name="Quackenbush J."/>
            <person name="Wahlestedt C."/>
            <person name="Mattick J.S."/>
            <person name="Hume D.A."/>
            <person name="Kai C."/>
            <person name="Sasaki D."/>
            <person name="Tomaru Y."/>
            <person name="Fukuda S."/>
            <person name="Kanamori-Katayama M."/>
            <person name="Suzuki M."/>
            <person name="Aoki J."/>
            <person name="Arakawa T."/>
            <person name="Iida J."/>
            <person name="Imamura K."/>
            <person name="Itoh M."/>
            <person name="Kato T."/>
            <person name="Kawaji H."/>
            <person name="Kawagashira N."/>
            <person name="Kawashima T."/>
            <person name="Kojima M."/>
            <person name="Kondo S."/>
            <person name="Konno H."/>
            <person name="Nakano K."/>
            <person name="Ninomiya N."/>
            <person name="Nishio T."/>
            <person name="Okada M."/>
            <person name="Plessy C."/>
            <person name="Shibata K."/>
            <person name="Shiraki T."/>
            <person name="Suzuki S."/>
            <person name="Tagami M."/>
            <person name="Waki K."/>
            <person name="Watahiki A."/>
            <person name="Okamura-Oho Y."/>
            <person name="Suzuki H."/>
            <person name="Kawai J."/>
            <person name="Hayashizaki Y."/>
        </authorList>
    </citation>
    <scope>NUCLEOTIDE SEQUENCE [LARGE SCALE MRNA] (ISOFORM 2)</scope>
    <source>
        <strain>C57BL/6J</strain>
        <tissue>Small intestine</tissue>
    </source>
</reference>
<reference key="2">
    <citation type="journal article" date="2009" name="PLoS Biol.">
        <title>Lineage-specific biology revealed by a finished genome assembly of the mouse.</title>
        <authorList>
            <person name="Church D.M."/>
            <person name="Goodstadt L."/>
            <person name="Hillier L.W."/>
            <person name="Zody M.C."/>
            <person name="Goldstein S."/>
            <person name="She X."/>
            <person name="Bult C.J."/>
            <person name="Agarwala R."/>
            <person name="Cherry J.L."/>
            <person name="DiCuccio M."/>
            <person name="Hlavina W."/>
            <person name="Kapustin Y."/>
            <person name="Meric P."/>
            <person name="Maglott D."/>
            <person name="Birtle Z."/>
            <person name="Marques A.C."/>
            <person name="Graves T."/>
            <person name="Zhou S."/>
            <person name="Teague B."/>
            <person name="Potamousis K."/>
            <person name="Churas C."/>
            <person name="Place M."/>
            <person name="Herschleb J."/>
            <person name="Runnheim R."/>
            <person name="Forrest D."/>
            <person name="Amos-Landgraf J."/>
            <person name="Schwartz D.C."/>
            <person name="Cheng Z."/>
            <person name="Lindblad-Toh K."/>
            <person name="Eichler E.E."/>
            <person name="Ponting C.P."/>
        </authorList>
    </citation>
    <scope>NUCLEOTIDE SEQUENCE [LARGE SCALE GENOMIC DNA]</scope>
    <source>
        <strain>C57BL/6J</strain>
    </source>
</reference>
<reference key="3">
    <citation type="journal article" date="2004" name="Genome Res.">
        <title>The status, quality, and expansion of the NIH full-length cDNA project: the Mammalian Gene Collection (MGC).</title>
        <authorList>
            <consortium name="The MGC Project Team"/>
        </authorList>
    </citation>
    <scope>NUCLEOTIDE SEQUENCE [LARGE SCALE MRNA] (ISOFORM 1)</scope>
    <source>
        <strain>FVB/N</strain>
        <tissue>Liver</tissue>
    </source>
</reference>
<dbReference type="EMBL" id="AK008522">
    <property type="protein sequence ID" value="BAB25718.1"/>
    <property type="molecule type" value="mRNA"/>
</dbReference>
<dbReference type="EMBL" id="AL591496">
    <property type="status" value="NOT_ANNOTATED_CDS"/>
    <property type="molecule type" value="Genomic_DNA"/>
</dbReference>
<dbReference type="EMBL" id="BC021945">
    <property type="protein sequence ID" value="AAH21945.1"/>
    <property type="molecule type" value="mRNA"/>
</dbReference>
<dbReference type="CCDS" id="CCDS48850.1">
    <molecule id="Q8VC26-1"/>
</dbReference>
<dbReference type="CCDS" id="CCDS70238.1">
    <molecule id="Q8VC26-2"/>
</dbReference>
<dbReference type="RefSeq" id="NP_001278085.1">
    <molecule id="Q8VC26-2"/>
    <property type="nucleotide sequence ID" value="NM_001291156.1"/>
</dbReference>
<dbReference type="RefSeq" id="NP_081525.1">
    <molecule id="Q8VC26-1"/>
    <property type="nucleotide sequence ID" value="NM_027249.3"/>
</dbReference>
<dbReference type="SMR" id="Q8VC26"/>
<dbReference type="FunCoup" id="Q8VC26">
    <property type="interactions" value="460"/>
</dbReference>
<dbReference type="STRING" id="10090.ENSMUSP00000042958"/>
<dbReference type="iPTMnet" id="Q8VC26"/>
<dbReference type="PhosphoSitePlus" id="Q8VC26"/>
<dbReference type="jPOST" id="Q8VC26"/>
<dbReference type="PaxDb" id="10090-ENSMUSP00000042958"/>
<dbReference type="ProteomicsDB" id="259401">
    <molecule id="Q8VC26-1"/>
</dbReference>
<dbReference type="ProteomicsDB" id="259402">
    <molecule id="Q8VC26-2"/>
</dbReference>
<dbReference type="Antibodypedia" id="62302">
    <property type="antibodies" value="58 antibodies from 12 providers"/>
</dbReference>
<dbReference type="Ensembl" id="ENSMUST00000043598.14">
    <molecule id="Q8VC26-1"/>
    <property type="protein sequence ID" value="ENSMUSP00000042958.8"/>
    <property type="gene ID" value="ENSMUSG00000038217.14"/>
</dbReference>
<dbReference type="Ensembl" id="ENSMUST00000108435.2">
    <molecule id="Q8VC26-2"/>
    <property type="protein sequence ID" value="ENSMUSP00000104074.2"/>
    <property type="gene ID" value="ENSMUSG00000038217.14"/>
</dbReference>
<dbReference type="GeneID" id="380712"/>
<dbReference type="KEGG" id="mmu:380712"/>
<dbReference type="UCSC" id="uc007kdw.2">
    <molecule id="Q8VC26-1"/>
    <property type="organism name" value="mouse"/>
</dbReference>
<dbReference type="UCSC" id="uc011xzl.2">
    <molecule id="Q8VC26-2"/>
    <property type="organism name" value="mouse"/>
</dbReference>
<dbReference type="AGR" id="MGI:1917141"/>
<dbReference type="CTD" id="727910"/>
<dbReference type="MGI" id="MGI:1917141">
    <property type="gene designation" value="Tlcd2"/>
</dbReference>
<dbReference type="VEuPathDB" id="HostDB:ENSMUSG00000038217"/>
<dbReference type="eggNOG" id="KOG4474">
    <property type="taxonomic scope" value="Eukaryota"/>
</dbReference>
<dbReference type="GeneTree" id="ENSGT01010000222313"/>
<dbReference type="HOGENOM" id="CLU_056440_2_1_1"/>
<dbReference type="InParanoid" id="Q8VC26"/>
<dbReference type="OMA" id="AWKWRNV"/>
<dbReference type="OrthoDB" id="10266980at2759"/>
<dbReference type="PhylomeDB" id="Q8VC26"/>
<dbReference type="TreeFam" id="TF315115"/>
<dbReference type="BioGRID-ORCS" id="380712">
    <property type="hits" value="4 hits in 77 CRISPR screens"/>
</dbReference>
<dbReference type="ChiTaRS" id="Tlcd2">
    <property type="organism name" value="mouse"/>
</dbReference>
<dbReference type="PRO" id="PR:Q8VC26"/>
<dbReference type="Proteomes" id="UP000000589">
    <property type="component" value="Chromosome 11"/>
</dbReference>
<dbReference type="RNAct" id="Q8VC26">
    <property type="molecule type" value="protein"/>
</dbReference>
<dbReference type="Bgee" id="ENSMUSG00000038217">
    <property type="expression patterns" value="Expressed in left lobe of liver and 182 other cell types or tissues"/>
</dbReference>
<dbReference type="GO" id="GO:0005886">
    <property type="term" value="C:plasma membrane"/>
    <property type="evidence" value="ECO:0007669"/>
    <property type="project" value="UniProtKB-SubCell"/>
</dbReference>
<dbReference type="GO" id="GO:0071709">
    <property type="term" value="P:membrane assembly"/>
    <property type="evidence" value="ECO:0007669"/>
    <property type="project" value="Ensembl"/>
</dbReference>
<dbReference type="GO" id="GO:0055091">
    <property type="term" value="P:phospholipid homeostasis"/>
    <property type="evidence" value="ECO:0007669"/>
    <property type="project" value="Ensembl"/>
</dbReference>
<dbReference type="GO" id="GO:0007009">
    <property type="term" value="P:plasma membrane organization"/>
    <property type="evidence" value="ECO:0007669"/>
    <property type="project" value="Ensembl"/>
</dbReference>
<dbReference type="GO" id="GO:0097035">
    <property type="term" value="P:regulation of membrane lipid distribution"/>
    <property type="evidence" value="ECO:0007669"/>
    <property type="project" value="Ensembl"/>
</dbReference>
<dbReference type="InterPro" id="IPR006634">
    <property type="entry name" value="TLC-dom"/>
</dbReference>
<dbReference type="InterPro" id="IPR050846">
    <property type="entry name" value="TLCD"/>
</dbReference>
<dbReference type="PANTHER" id="PTHR13439">
    <property type="entry name" value="CT120 PROTEIN"/>
    <property type="match status" value="1"/>
</dbReference>
<dbReference type="PANTHER" id="PTHR13439:SF2">
    <property type="entry name" value="TLC DOMAIN-CONTAINING PROTEIN 2"/>
    <property type="match status" value="1"/>
</dbReference>
<dbReference type="Pfam" id="PF03798">
    <property type="entry name" value="TRAM_LAG1_CLN8"/>
    <property type="match status" value="1"/>
</dbReference>
<dbReference type="SMART" id="SM00724">
    <property type="entry name" value="TLC"/>
    <property type="match status" value="1"/>
</dbReference>
<dbReference type="PROSITE" id="PS50922">
    <property type="entry name" value="TLC"/>
    <property type="match status" value="1"/>
</dbReference>
<name>TLCD2_MOUSE</name>
<gene>
    <name type="primary">Tlcd2</name>
</gene>
<accession>Q8VC26</accession>
<accession>Q9D837</accession>
<organism>
    <name type="scientific">Mus musculus</name>
    <name type="common">Mouse</name>
    <dbReference type="NCBI Taxonomy" id="10090"/>
    <lineage>
        <taxon>Eukaryota</taxon>
        <taxon>Metazoa</taxon>
        <taxon>Chordata</taxon>
        <taxon>Craniata</taxon>
        <taxon>Vertebrata</taxon>
        <taxon>Euteleostomi</taxon>
        <taxon>Mammalia</taxon>
        <taxon>Eutheria</taxon>
        <taxon>Euarchontoglires</taxon>
        <taxon>Glires</taxon>
        <taxon>Rodentia</taxon>
        <taxon>Myomorpha</taxon>
        <taxon>Muroidea</taxon>
        <taxon>Muridae</taxon>
        <taxon>Murinae</taxon>
        <taxon>Mus</taxon>
        <taxon>Mus</taxon>
    </lineage>
</organism>
<feature type="chain" id="PRO_0000328991" description="TLC domain-containing protein 2">
    <location>
        <begin position="1"/>
        <end position="310"/>
    </location>
</feature>
<feature type="transmembrane region" description="Helical" evidence="2">
    <location>
        <begin position="6"/>
        <end position="26"/>
    </location>
</feature>
<feature type="transmembrane region" description="Helical" evidence="2">
    <location>
        <begin position="40"/>
        <end position="60"/>
    </location>
</feature>
<feature type="transmembrane region" description="Helical" evidence="2">
    <location>
        <begin position="79"/>
        <end position="99"/>
    </location>
</feature>
<feature type="transmembrane region" description="Helical" evidence="2">
    <location>
        <begin position="117"/>
        <end position="137"/>
    </location>
</feature>
<feature type="transmembrane region" description="Helical" evidence="2">
    <location>
        <begin position="167"/>
        <end position="187"/>
    </location>
</feature>
<feature type="transmembrane region" description="Helical" evidence="2">
    <location>
        <begin position="194"/>
        <end position="214"/>
    </location>
</feature>
<feature type="domain" description="TLC" evidence="3">
    <location>
        <begin position="33"/>
        <end position="227"/>
    </location>
</feature>
<feature type="splice variant" id="VSP_032879" description="In isoform 2." evidence="4">
    <original>VSSWASLATLVLFRLLPLGWMSLWLS</original>
    <variation>APDTCTPLLLLLLVVISWYWHLQNAA</variation>
    <location>
        <begin position="163"/>
        <end position="188"/>
    </location>
</feature>
<feature type="splice variant" id="VSP_032880" description="In isoform 2." evidence="4">
    <location>
        <begin position="189"/>
        <end position="310"/>
    </location>
</feature>
<sequence length="310" mass="34139">MASWGLLVAGASFTAFRGLHWGLQLLPTPKSVRDRWMWRNIFVSLIHSLLSGVGALVGLWQFPQMVTDPINDHPPWARVLVAVSVGYFAADGVDMLWNQTLAQAWDLLCHHLAVVSCLSTAVVSGHYVGFSMVSLLLELNSICLHLRKLLLLSHKAPSLAFRVSSWASLATLVLFRLLPLGWMSLWLSRQHYQLSLALVLLCVAGLVTVGSISISTGIRILTKDILQSQPYPFILMHKETKTREPVARNTSTLSLKGSRYLYSTAAAALGGHLMVLASPKRCMTPSVLGLQERRLEPGKVAHADNASTWE</sequence>